<gene>
    <name evidence="1" type="primary">grpE1</name>
    <name type="ordered locus">BUsg_243</name>
</gene>
<name>GRPE1_BUCAP</name>
<dbReference type="EMBL" id="AE013218">
    <property type="protein sequence ID" value="AAM67802.1"/>
    <property type="molecule type" value="Genomic_DNA"/>
</dbReference>
<dbReference type="RefSeq" id="WP_011053769.1">
    <property type="nucleotide sequence ID" value="NC_004061.1"/>
</dbReference>
<dbReference type="SMR" id="Q8K9R7"/>
<dbReference type="STRING" id="198804.BUsg_243"/>
<dbReference type="GeneID" id="93003713"/>
<dbReference type="KEGG" id="bas:BUsg_243"/>
<dbReference type="eggNOG" id="COG0576">
    <property type="taxonomic scope" value="Bacteria"/>
</dbReference>
<dbReference type="HOGENOM" id="CLU_057217_6_0_6"/>
<dbReference type="Proteomes" id="UP000000416">
    <property type="component" value="Chromosome"/>
</dbReference>
<dbReference type="GO" id="GO:0005737">
    <property type="term" value="C:cytoplasm"/>
    <property type="evidence" value="ECO:0007669"/>
    <property type="project" value="UniProtKB-SubCell"/>
</dbReference>
<dbReference type="GO" id="GO:0000774">
    <property type="term" value="F:adenyl-nucleotide exchange factor activity"/>
    <property type="evidence" value="ECO:0007669"/>
    <property type="project" value="InterPro"/>
</dbReference>
<dbReference type="GO" id="GO:0042803">
    <property type="term" value="F:protein homodimerization activity"/>
    <property type="evidence" value="ECO:0007669"/>
    <property type="project" value="InterPro"/>
</dbReference>
<dbReference type="GO" id="GO:0051087">
    <property type="term" value="F:protein-folding chaperone binding"/>
    <property type="evidence" value="ECO:0007669"/>
    <property type="project" value="InterPro"/>
</dbReference>
<dbReference type="GO" id="GO:0051082">
    <property type="term" value="F:unfolded protein binding"/>
    <property type="evidence" value="ECO:0007669"/>
    <property type="project" value="TreeGrafter"/>
</dbReference>
<dbReference type="GO" id="GO:0006457">
    <property type="term" value="P:protein folding"/>
    <property type="evidence" value="ECO:0007669"/>
    <property type="project" value="InterPro"/>
</dbReference>
<dbReference type="CDD" id="cd00446">
    <property type="entry name" value="GrpE"/>
    <property type="match status" value="1"/>
</dbReference>
<dbReference type="FunFam" id="2.30.22.10:FF:000001">
    <property type="entry name" value="Protein GrpE"/>
    <property type="match status" value="1"/>
</dbReference>
<dbReference type="Gene3D" id="3.90.20.20">
    <property type="match status" value="1"/>
</dbReference>
<dbReference type="Gene3D" id="2.30.22.10">
    <property type="entry name" value="Head domain of nucleotide exchange factor GrpE"/>
    <property type="match status" value="1"/>
</dbReference>
<dbReference type="HAMAP" id="MF_01151">
    <property type="entry name" value="GrpE"/>
    <property type="match status" value="1"/>
</dbReference>
<dbReference type="InterPro" id="IPR000740">
    <property type="entry name" value="GrpE"/>
</dbReference>
<dbReference type="InterPro" id="IPR013805">
    <property type="entry name" value="GrpE_coiled_coil"/>
</dbReference>
<dbReference type="InterPro" id="IPR009012">
    <property type="entry name" value="GrpE_head"/>
</dbReference>
<dbReference type="PANTHER" id="PTHR21237">
    <property type="entry name" value="GRPE PROTEIN"/>
    <property type="match status" value="1"/>
</dbReference>
<dbReference type="PANTHER" id="PTHR21237:SF23">
    <property type="entry name" value="GRPE PROTEIN HOMOLOG, MITOCHONDRIAL"/>
    <property type="match status" value="1"/>
</dbReference>
<dbReference type="Pfam" id="PF01025">
    <property type="entry name" value="GrpE"/>
    <property type="match status" value="1"/>
</dbReference>
<dbReference type="SUPFAM" id="SSF58014">
    <property type="entry name" value="Coiled-coil domain of nucleotide exchange factor GrpE"/>
    <property type="match status" value="1"/>
</dbReference>
<dbReference type="SUPFAM" id="SSF51064">
    <property type="entry name" value="Head domain of nucleotide exchange factor GrpE"/>
    <property type="match status" value="1"/>
</dbReference>
<dbReference type="PROSITE" id="PS01071">
    <property type="entry name" value="GRPE"/>
    <property type="match status" value="1"/>
</dbReference>
<keyword id="KW-0143">Chaperone</keyword>
<keyword id="KW-0963">Cytoplasm</keyword>
<keyword id="KW-0346">Stress response</keyword>
<feature type="chain" id="PRO_0000113758" description="Protein GrpE 1">
    <location>
        <begin position="1"/>
        <end position="202"/>
    </location>
</feature>
<organism>
    <name type="scientific">Buchnera aphidicola subsp. Schizaphis graminum (strain Sg)</name>
    <dbReference type="NCBI Taxonomy" id="198804"/>
    <lineage>
        <taxon>Bacteria</taxon>
        <taxon>Pseudomonadati</taxon>
        <taxon>Pseudomonadota</taxon>
        <taxon>Gammaproteobacteria</taxon>
        <taxon>Enterobacterales</taxon>
        <taxon>Erwiniaceae</taxon>
        <taxon>Buchnera</taxon>
    </lineage>
</organism>
<sequence length="202" mass="24068">MKNKKEEKINNLKKEEKINNLKKEEKINNLKKEEKEKNDDVQNKIIDLLEIKLKKSQEKIINMQLKNHEEILKLNYRLNSDIEKSRKFSLEKVIIEFLPIIDNIERALSVIKDKKEAFYLEIINKMNFIFSLLEEILSEFNVSKINEKNISFDPEIHQAMSINYNDEIEDNHVVDVMQSGYMLHKARLLRPAMVIVSKRKNN</sequence>
<evidence type="ECO:0000255" key="1">
    <source>
        <dbReference type="HAMAP-Rule" id="MF_01151"/>
    </source>
</evidence>
<comment type="function">
    <text evidence="1">Participates actively in the response to hyperosmotic and heat shock by preventing the aggregation of stress-denatured proteins, in association with DnaK and GrpE. It is the nucleotide exchange factor for DnaK and may function as a thermosensor. Unfolded proteins bind initially to DnaJ; upon interaction with the DnaJ-bound protein, DnaK hydrolyzes its bound ATP, resulting in the formation of a stable complex. GrpE releases ADP from DnaK; ATP binding to DnaK triggers the release of the substrate protein, thus completing the reaction cycle. Several rounds of ATP-dependent interactions between DnaJ, DnaK and GrpE are required for fully efficient folding.</text>
</comment>
<comment type="subunit">
    <text evidence="1">Homodimer.</text>
</comment>
<comment type="subcellular location">
    <subcellularLocation>
        <location evidence="1">Cytoplasm</location>
    </subcellularLocation>
</comment>
<comment type="similarity">
    <text evidence="1">Belongs to the GrpE family.</text>
</comment>
<protein>
    <recommendedName>
        <fullName evidence="1">Protein GrpE 1</fullName>
    </recommendedName>
    <alternativeName>
        <fullName evidence="1">HSP-70 cofactor 1</fullName>
    </alternativeName>
</protein>
<accession>Q8K9R7</accession>
<reference key="1">
    <citation type="journal article" date="2002" name="Science">
        <title>50 million years of genomic stasis in endosymbiotic bacteria.</title>
        <authorList>
            <person name="Tamas I."/>
            <person name="Klasson L."/>
            <person name="Canbaeck B."/>
            <person name="Naeslund A.K."/>
            <person name="Eriksson A.-S."/>
            <person name="Wernegreen J.J."/>
            <person name="Sandstroem J.P."/>
            <person name="Moran N.A."/>
            <person name="Andersson S.G.E."/>
        </authorList>
    </citation>
    <scope>NUCLEOTIDE SEQUENCE [LARGE SCALE GENOMIC DNA]</scope>
    <source>
        <strain>Sg</strain>
    </source>
</reference>
<proteinExistence type="inferred from homology"/>